<dbReference type="EMBL" id="CU329670">
    <property type="protein sequence ID" value="CAB77003.1"/>
    <property type="molecule type" value="Genomic_DNA"/>
</dbReference>
<dbReference type="BioGRID" id="278504">
    <property type="interactions" value="106"/>
</dbReference>
<dbReference type="STRING" id="284812.Q9P7G6"/>
<dbReference type="iPTMnet" id="Q9P7G6"/>
<dbReference type="PaxDb" id="4896-SPAP14E8.02.1"/>
<dbReference type="EnsemblFungi" id="SPAP14E8.02.1">
    <property type="protein sequence ID" value="SPAP14E8.02.1:pep"/>
    <property type="gene ID" value="SPAP14E8.02"/>
</dbReference>
<dbReference type="KEGG" id="spo:2542021"/>
<dbReference type="PomBase" id="SPAP14E8.02"/>
<dbReference type="VEuPathDB" id="FungiDB:SPAP14E8.02"/>
<dbReference type="eggNOG" id="ENOG502RZJP">
    <property type="taxonomic scope" value="Eukaryota"/>
</dbReference>
<dbReference type="HOGENOM" id="CLU_027207_0_0_1"/>
<dbReference type="InParanoid" id="Q9P7G6"/>
<dbReference type="OMA" id="RDRVEIM"/>
<dbReference type="PhylomeDB" id="Q9P7G6"/>
<dbReference type="PRO" id="PR:Q9P7G6"/>
<dbReference type="Proteomes" id="UP000002485">
    <property type="component" value="Chromosome I"/>
</dbReference>
<dbReference type="GO" id="GO:0000785">
    <property type="term" value="C:chromatin"/>
    <property type="evidence" value="ECO:0000266"/>
    <property type="project" value="PomBase"/>
</dbReference>
<dbReference type="GO" id="GO:0005634">
    <property type="term" value="C:nucleus"/>
    <property type="evidence" value="ECO:0000314"/>
    <property type="project" value="PomBase"/>
</dbReference>
<dbReference type="GO" id="GO:0003682">
    <property type="term" value="F:chromatin binding"/>
    <property type="evidence" value="ECO:0000266"/>
    <property type="project" value="PomBase"/>
</dbReference>
<dbReference type="GO" id="GO:0006974">
    <property type="term" value="P:DNA damage response"/>
    <property type="evidence" value="ECO:0000266"/>
    <property type="project" value="PomBase"/>
</dbReference>
<dbReference type="GO" id="GO:0045892">
    <property type="term" value="P:negative regulation of DNA-templated transcription"/>
    <property type="evidence" value="ECO:0000266"/>
    <property type="project" value="PomBase"/>
</dbReference>
<dbReference type="CDD" id="cd22699">
    <property type="entry name" value="FHA_PLM2-like"/>
    <property type="match status" value="1"/>
</dbReference>
<dbReference type="Gene3D" id="2.60.200.20">
    <property type="match status" value="1"/>
</dbReference>
<dbReference type="InterPro" id="IPR000253">
    <property type="entry name" value="FHA_dom"/>
</dbReference>
<dbReference type="InterPro" id="IPR008984">
    <property type="entry name" value="SMAD_FHA_dom_sf"/>
</dbReference>
<dbReference type="Pfam" id="PF00498">
    <property type="entry name" value="FHA"/>
    <property type="match status" value="1"/>
</dbReference>
<dbReference type="SUPFAM" id="SSF49879">
    <property type="entry name" value="SMAD/FHA domain"/>
    <property type="match status" value="1"/>
</dbReference>
<dbReference type="PROSITE" id="PS50006">
    <property type="entry name" value="FHA_DOMAIN"/>
    <property type="match status" value="1"/>
</dbReference>
<accession>Q9P7G6</accession>
<sequence>MNISSQNVLLPSPIPSSSPMASHKKSWLSKHPNQSMTFEKPQLGQFVLTPEPSSNTFYAPSSPASAVRREPLSPMSFVRMRSHRVNKIGRSSQQCDHVLSTVDKAISRVHAIVTCTQDRMIIECVGWNGMIVSDKMRKSVFHMKKNDRIVLVRPNSDACPVLDVFGYRVLLGWPSDSEDEWEGNLNAKNYEENREPMSPSPQEALPLMPSSPPSQDYQNDQNHLILYTNSESIPKLNLRSNELVYPPPSKDLLQKLLALEKDGQVEKSDCSKNTQLKPSFLPKNTDDLLNGTDDNNIVLREVKVSFENEKIESDDLDKNEEISEGEEYTPIEESKEPITVRRDSVIQIDESSAGLTDVISELNFTNHNDDSKNSNITTSNDSPVNEVEPMAPELSSAVVEKKEPEDYESISAVDENTNDSNESLPSSHDYSESTKENSAPDSLLLGLVLDELVFSTTSTTPLPALSHLFPSNMPLQLIQDKLRDLAAKHPYFEEVKRYGTDANGDPLWSEWFYNPDVDDDLERRMRYAPLMRPVRSSRRVHKQYYWKKPRARPRSSGHSSRRRRLS</sequence>
<reference evidence="7" key="1">
    <citation type="journal article" date="2002" name="Nature">
        <title>The genome sequence of Schizosaccharomyces pombe.</title>
        <authorList>
            <person name="Wood V."/>
            <person name="Gwilliam R."/>
            <person name="Rajandream M.A."/>
            <person name="Lyne M.H."/>
            <person name="Lyne R."/>
            <person name="Stewart A."/>
            <person name="Sgouros J.G."/>
            <person name="Peat N."/>
            <person name="Hayles J."/>
            <person name="Baker S.G."/>
            <person name="Basham D."/>
            <person name="Bowman S."/>
            <person name="Brooks K."/>
            <person name="Brown D."/>
            <person name="Brown S."/>
            <person name="Chillingworth T."/>
            <person name="Churcher C.M."/>
            <person name="Collins M."/>
            <person name="Connor R."/>
            <person name="Cronin A."/>
            <person name="Davis P."/>
            <person name="Feltwell T."/>
            <person name="Fraser A."/>
            <person name="Gentles S."/>
            <person name="Goble A."/>
            <person name="Hamlin N."/>
            <person name="Harris D.E."/>
            <person name="Hidalgo J."/>
            <person name="Hodgson G."/>
            <person name="Holroyd S."/>
            <person name="Hornsby T."/>
            <person name="Howarth S."/>
            <person name="Huckle E.J."/>
            <person name="Hunt S."/>
            <person name="Jagels K."/>
            <person name="James K.D."/>
            <person name="Jones L."/>
            <person name="Jones M."/>
            <person name="Leather S."/>
            <person name="McDonald S."/>
            <person name="McLean J."/>
            <person name="Mooney P."/>
            <person name="Moule S."/>
            <person name="Mungall K.L."/>
            <person name="Murphy L.D."/>
            <person name="Niblett D."/>
            <person name="Odell C."/>
            <person name="Oliver K."/>
            <person name="O'Neil S."/>
            <person name="Pearson D."/>
            <person name="Quail M.A."/>
            <person name="Rabbinowitsch E."/>
            <person name="Rutherford K.M."/>
            <person name="Rutter S."/>
            <person name="Saunders D."/>
            <person name="Seeger K."/>
            <person name="Sharp S."/>
            <person name="Skelton J."/>
            <person name="Simmonds M.N."/>
            <person name="Squares R."/>
            <person name="Squares S."/>
            <person name="Stevens K."/>
            <person name="Taylor K."/>
            <person name="Taylor R.G."/>
            <person name="Tivey A."/>
            <person name="Walsh S.V."/>
            <person name="Warren T."/>
            <person name="Whitehead S."/>
            <person name="Woodward J.R."/>
            <person name="Volckaert G."/>
            <person name="Aert R."/>
            <person name="Robben J."/>
            <person name="Grymonprez B."/>
            <person name="Weltjens I."/>
            <person name="Vanstreels E."/>
            <person name="Rieger M."/>
            <person name="Schaefer M."/>
            <person name="Mueller-Auer S."/>
            <person name="Gabel C."/>
            <person name="Fuchs M."/>
            <person name="Duesterhoeft A."/>
            <person name="Fritzc C."/>
            <person name="Holzer E."/>
            <person name="Moestl D."/>
            <person name="Hilbert H."/>
            <person name="Borzym K."/>
            <person name="Langer I."/>
            <person name="Beck A."/>
            <person name="Lehrach H."/>
            <person name="Reinhardt R."/>
            <person name="Pohl T.M."/>
            <person name="Eger P."/>
            <person name="Zimmermann W."/>
            <person name="Wedler H."/>
            <person name="Wambutt R."/>
            <person name="Purnelle B."/>
            <person name="Goffeau A."/>
            <person name="Cadieu E."/>
            <person name="Dreano S."/>
            <person name="Gloux S."/>
            <person name="Lelaure V."/>
            <person name="Mottier S."/>
            <person name="Galibert F."/>
            <person name="Aves S.J."/>
            <person name="Xiang Z."/>
            <person name="Hunt C."/>
            <person name="Moore K."/>
            <person name="Hurst S.M."/>
            <person name="Lucas M."/>
            <person name="Rochet M."/>
            <person name="Gaillardin C."/>
            <person name="Tallada V.A."/>
            <person name="Garzon A."/>
            <person name="Thode G."/>
            <person name="Daga R.R."/>
            <person name="Cruzado L."/>
            <person name="Jimenez J."/>
            <person name="Sanchez M."/>
            <person name="del Rey F."/>
            <person name="Benito J."/>
            <person name="Dominguez A."/>
            <person name="Revuelta J.L."/>
            <person name="Moreno S."/>
            <person name="Armstrong J."/>
            <person name="Forsburg S.L."/>
            <person name="Cerutti L."/>
            <person name="Lowe T."/>
            <person name="McCombie W.R."/>
            <person name="Paulsen I."/>
            <person name="Potashkin J."/>
            <person name="Shpakovski G.V."/>
            <person name="Ussery D."/>
            <person name="Barrell B.G."/>
            <person name="Nurse P."/>
        </authorList>
    </citation>
    <scope>NUCLEOTIDE SEQUENCE [LARGE SCALE GENOMIC DNA]</scope>
    <source>
        <strain>972 / ATCC 24843</strain>
    </source>
</reference>
<reference evidence="6" key="2">
    <citation type="journal article" date="2004" name="Nat. Genet.">
        <title>Periodic gene expression program of the fission yeast cell cycle.</title>
        <authorList>
            <person name="Rustici G."/>
            <person name="Mata J."/>
            <person name="Kivinen K."/>
            <person name="Lio P."/>
            <person name="Penkett C.J."/>
            <person name="Burns G."/>
            <person name="Hayles J."/>
            <person name="Brazma A."/>
            <person name="Nurse P."/>
            <person name="Baehler J."/>
        </authorList>
    </citation>
    <scope>FUNCTION</scope>
    <scope>INDUCTION</scope>
</reference>
<reference evidence="6" key="3">
    <citation type="journal article" date="2006" name="Nat. Biotechnol.">
        <title>ORFeome cloning and global analysis of protein localization in the fission yeast Schizosaccharomyces pombe.</title>
        <authorList>
            <person name="Matsuyama A."/>
            <person name="Arai R."/>
            <person name="Yashiroda Y."/>
            <person name="Shirai A."/>
            <person name="Kamata A."/>
            <person name="Sekido S."/>
            <person name="Kobayashi Y."/>
            <person name="Hashimoto A."/>
            <person name="Hamamoto M."/>
            <person name="Hiraoka Y."/>
            <person name="Horinouchi S."/>
            <person name="Yoshida M."/>
        </authorList>
    </citation>
    <scope>SUBCELLULAR LOCATION [LARGE SCALE ANALYSIS]</scope>
</reference>
<reference evidence="6" key="4">
    <citation type="journal article" date="2008" name="J. Proteome Res.">
        <title>Phosphoproteome analysis of fission yeast.</title>
        <authorList>
            <person name="Wilson-Grady J.T."/>
            <person name="Villen J."/>
            <person name="Gygi S.P."/>
        </authorList>
    </citation>
    <scope>PHOSPHORYLATION [LARGE SCALE ANALYSIS] AT SER-73; SER-379 AND SER-382</scope>
    <scope>IDENTIFICATION BY MASS SPECTROMETRY</scope>
</reference>
<organism>
    <name type="scientific">Schizosaccharomyces pombe (strain 972 / ATCC 24843)</name>
    <name type="common">Fission yeast</name>
    <dbReference type="NCBI Taxonomy" id="284812"/>
    <lineage>
        <taxon>Eukaryota</taxon>
        <taxon>Fungi</taxon>
        <taxon>Dikarya</taxon>
        <taxon>Ascomycota</taxon>
        <taxon>Taphrinomycotina</taxon>
        <taxon>Schizosaccharomycetes</taxon>
        <taxon>Schizosaccharomycetales</taxon>
        <taxon>Schizosaccharomycetaceae</taxon>
        <taxon>Schizosaccharomyces</taxon>
    </lineage>
</organism>
<comment type="function">
    <text evidence="3">Probable transcriptional regulatory protein Required for G1/S progression.</text>
</comment>
<comment type="subcellular location">
    <subcellularLocation>
        <location evidence="4">Nucleus</location>
    </subcellularLocation>
</comment>
<comment type="induction">
    <text evidence="3">Transcriptionally regulated in a cell cycle-dependent manner by the mlu1 cell-cycle box binding factor (MBF) complex independently of sep1 and ace2. Strongly up-regulated in cells arrested in S phase by hydroxyurea.</text>
</comment>
<comment type="similarity">
    <text evidence="6">Belongs to the PLM2/TOS4 family.</text>
</comment>
<feature type="chain" id="PRO_0000353195" description="Transcription factor P14E8.02">
    <location>
        <begin position="1"/>
        <end position="566"/>
    </location>
</feature>
<feature type="domain" description="FHA" evidence="1">
    <location>
        <begin position="86"/>
        <end position="137"/>
    </location>
</feature>
<feature type="region of interest" description="Disordered" evidence="2">
    <location>
        <begin position="1"/>
        <end position="32"/>
    </location>
</feature>
<feature type="region of interest" description="Disordered" evidence="2">
    <location>
        <begin position="191"/>
        <end position="217"/>
    </location>
</feature>
<feature type="region of interest" description="Disordered" evidence="2">
    <location>
        <begin position="269"/>
        <end position="291"/>
    </location>
</feature>
<feature type="region of interest" description="Disordered" evidence="2">
    <location>
        <begin position="312"/>
        <end position="334"/>
    </location>
</feature>
<feature type="region of interest" description="Disordered" evidence="2">
    <location>
        <begin position="364"/>
        <end position="437"/>
    </location>
</feature>
<feature type="compositionally biased region" description="Acidic residues" evidence="2">
    <location>
        <begin position="314"/>
        <end position="330"/>
    </location>
</feature>
<feature type="compositionally biased region" description="Polar residues" evidence="2">
    <location>
        <begin position="373"/>
        <end position="383"/>
    </location>
</feature>
<feature type="compositionally biased region" description="Polar residues" evidence="2">
    <location>
        <begin position="414"/>
        <end position="428"/>
    </location>
</feature>
<feature type="modified residue" description="Phosphoserine" evidence="5">
    <location>
        <position position="73"/>
    </location>
</feature>
<feature type="modified residue" description="Phosphoserine" evidence="5">
    <location>
        <position position="379"/>
    </location>
</feature>
<feature type="modified residue" description="Phosphoserine" evidence="5">
    <location>
        <position position="382"/>
    </location>
</feature>
<keyword id="KW-0539">Nucleus</keyword>
<keyword id="KW-0597">Phosphoprotein</keyword>
<keyword id="KW-1185">Reference proteome</keyword>
<keyword id="KW-0804">Transcription</keyword>
<keyword id="KW-0805">Transcription regulation</keyword>
<evidence type="ECO:0000255" key="1">
    <source>
        <dbReference type="PROSITE-ProRule" id="PRU00086"/>
    </source>
</evidence>
<evidence type="ECO:0000256" key="2">
    <source>
        <dbReference type="SAM" id="MobiDB-lite"/>
    </source>
</evidence>
<evidence type="ECO:0000269" key="3">
    <source>
    </source>
</evidence>
<evidence type="ECO:0000269" key="4">
    <source>
    </source>
</evidence>
<evidence type="ECO:0000269" key="5">
    <source>
    </source>
</evidence>
<evidence type="ECO:0000305" key="6"/>
<evidence type="ECO:0000312" key="7">
    <source>
        <dbReference type="EMBL" id="CAB77003.1"/>
    </source>
</evidence>
<gene>
    <name type="ORF">SPAP14E8.02</name>
</gene>
<protein>
    <recommendedName>
        <fullName evidence="7">Transcription factor P14E8.02</fullName>
    </recommendedName>
</protein>
<name>YK42_SCHPO</name>
<proteinExistence type="evidence at protein level"/>